<feature type="chain" id="PRO_0000300477" description="Uncharacterized oxidoreductase SAUSA300_2422">
    <location>
        <begin position="1"/>
        <end position="231"/>
    </location>
</feature>
<feature type="active site" description="Proton acceptor" evidence="1">
    <location>
        <position position="153"/>
    </location>
</feature>
<feature type="binding site" evidence="1">
    <location>
        <begin position="10"/>
        <end position="34"/>
    </location>
    <ligand>
        <name>NADP(+)</name>
        <dbReference type="ChEBI" id="CHEBI:58349"/>
    </ligand>
</feature>
<feature type="binding site" evidence="1">
    <location>
        <position position="140"/>
    </location>
    <ligand>
        <name>substrate</name>
    </ligand>
</feature>
<sequence>MTVLTDKVAVVTGAGSGIGEAIATLLHEEGAKVVLAGRNKEKLQNVANQLSQDSVKVVPTDVTNKEEVDELIKIAQQTFGGLDIVINSAGQMLSSKITDYQVDEWDSMIDVNIKGTLYTAQAALPTMLEQSSGHLINIASISGFEVTKSSTIYSATKAAVHTITQGLEKELAKTGVKVTSISPGMVDTAITAAYNPTDRKKLEPQDIAEAVLYALTQPKHVNVNEITVRPV</sequence>
<evidence type="ECO:0000250" key="1"/>
<evidence type="ECO:0000305" key="2"/>
<reference key="1">
    <citation type="journal article" date="2006" name="Lancet">
        <title>Complete genome sequence of USA300, an epidemic clone of community-acquired meticillin-resistant Staphylococcus aureus.</title>
        <authorList>
            <person name="Diep B.A."/>
            <person name="Gill S.R."/>
            <person name="Chang R.F."/>
            <person name="Phan T.H."/>
            <person name="Chen J.H."/>
            <person name="Davidson M.G."/>
            <person name="Lin F."/>
            <person name="Lin J."/>
            <person name="Carleton H.A."/>
            <person name="Mongodin E.F."/>
            <person name="Sensabaugh G.F."/>
            <person name="Perdreau-Remington F."/>
        </authorList>
    </citation>
    <scope>NUCLEOTIDE SEQUENCE [LARGE SCALE GENOMIC DNA]</scope>
    <source>
        <strain>USA300</strain>
    </source>
</reference>
<protein>
    <recommendedName>
        <fullName>Uncharacterized oxidoreductase SAUSA300_2422</fullName>
        <ecNumber>1.-.-.-</ecNumber>
    </recommendedName>
</protein>
<organism>
    <name type="scientific">Staphylococcus aureus (strain USA300)</name>
    <dbReference type="NCBI Taxonomy" id="367830"/>
    <lineage>
        <taxon>Bacteria</taxon>
        <taxon>Bacillati</taxon>
        <taxon>Bacillota</taxon>
        <taxon>Bacilli</taxon>
        <taxon>Bacillales</taxon>
        <taxon>Staphylococcaceae</taxon>
        <taxon>Staphylococcus</taxon>
    </lineage>
</organism>
<name>Y2422_STAA3</name>
<gene>
    <name type="ordered locus">SAUSA300_2422</name>
</gene>
<accession>Q2FE21</accession>
<proteinExistence type="inferred from homology"/>
<dbReference type="EC" id="1.-.-.-"/>
<dbReference type="EMBL" id="CP000255">
    <property type="protein sequence ID" value="ABD21152.1"/>
    <property type="molecule type" value="Genomic_DNA"/>
</dbReference>
<dbReference type="RefSeq" id="WP_000217466.1">
    <property type="nucleotide sequence ID" value="NZ_CP027476.1"/>
</dbReference>
<dbReference type="SMR" id="Q2FE21"/>
<dbReference type="KEGG" id="saa:SAUSA300_2422"/>
<dbReference type="HOGENOM" id="CLU_010194_2_10_9"/>
<dbReference type="OMA" id="VHMTKAM"/>
<dbReference type="Proteomes" id="UP000001939">
    <property type="component" value="Chromosome"/>
</dbReference>
<dbReference type="GO" id="GO:0016491">
    <property type="term" value="F:oxidoreductase activity"/>
    <property type="evidence" value="ECO:0007669"/>
    <property type="project" value="UniProtKB-KW"/>
</dbReference>
<dbReference type="CDD" id="cd05233">
    <property type="entry name" value="SDR_c"/>
    <property type="match status" value="1"/>
</dbReference>
<dbReference type="FunFam" id="3.40.50.720:FF:000047">
    <property type="entry name" value="NADP-dependent L-serine/L-allo-threonine dehydrogenase"/>
    <property type="match status" value="1"/>
</dbReference>
<dbReference type="Gene3D" id="3.40.50.720">
    <property type="entry name" value="NAD(P)-binding Rossmann-like Domain"/>
    <property type="match status" value="1"/>
</dbReference>
<dbReference type="InterPro" id="IPR036291">
    <property type="entry name" value="NAD(P)-bd_dom_sf"/>
</dbReference>
<dbReference type="InterPro" id="IPR002347">
    <property type="entry name" value="SDR_fam"/>
</dbReference>
<dbReference type="PANTHER" id="PTHR43115">
    <property type="entry name" value="DEHYDROGENASE/REDUCTASE SDR FAMILY MEMBER 11"/>
    <property type="match status" value="1"/>
</dbReference>
<dbReference type="PANTHER" id="PTHR43115:SF4">
    <property type="entry name" value="DEHYDROGENASE_REDUCTASE SDR FAMILY MEMBER 11"/>
    <property type="match status" value="1"/>
</dbReference>
<dbReference type="Pfam" id="PF00106">
    <property type="entry name" value="adh_short"/>
    <property type="match status" value="1"/>
</dbReference>
<dbReference type="PRINTS" id="PR00081">
    <property type="entry name" value="GDHRDH"/>
</dbReference>
<dbReference type="PRINTS" id="PR00080">
    <property type="entry name" value="SDRFAMILY"/>
</dbReference>
<dbReference type="SUPFAM" id="SSF51735">
    <property type="entry name" value="NAD(P)-binding Rossmann-fold domains"/>
    <property type="match status" value="1"/>
</dbReference>
<keyword id="KW-0560">Oxidoreductase</keyword>
<comment type="similarity">
    <text evidence="2">Belongs to the short-chain dehydrogenases/reductases (SDR) family.</text>
</comment>